<comment type="function">
    <text evidence="1">Forms part of the ribosomal stalk which helps the ribosome interact with GTP-bound translation factors. Is thus essential for accurate translation.</text>
</comment>
<comment type="subunit">
    <text evidence="1">Homodimer. Part of the ribosomal stalk of the 50S ribosomal subunit. Forms a multimeric L10(L12)X complex, where L10 forms an elongated spine to which 2 to 4 L12 dimers bind in a sequential fashion. Binds GTP-bound translation factors.</text>
</comment>
<comment type="similarity">
    <text evidence="1">Belongs to the bacterial ribosomal protein bL12 family.</text>
</comment>
<accession>E6MUA0</accession>
<evidence type="ECO:0000255" key="1">
    <source>
        <dbReference type="HAMAP-Rule" id="MF_00368"/>
    </source>
</evidence>
<evidence type="ECO:0000269" key="2">
    <source>
    </source>
</evidence>
<evidence type="ECO:0000305" key="3"/>
<dbReference type="EMBL" id="AEQZ01000003">
    <property type="protein sequence ID" value="EFV64912.1"/>
    <property type="molecule type" value="Genomic_DNA"/>
</dbReference>
<dbReference type="EMBL" id="CP002420">
    <property type="protein sequence ID" value="ADY94799.1"/>
    <property type="molecule type" value="Genomic_DNA"/>
</dbReference>
<dbReference type="RefSeq" id="WP_002215374.1">
    <property type="nucleotide sequence ID" value="NZ_AEQZ01000003.1"/>
</dbReference>
<dbReference type="SMR" id="E6MUA0"/>
<dbReference type="GeneID" id="93387206"/>
<dbReference type="KEGG" id="nmh:NMBH4476_0128"/>
<dbReference type="PATRIC" id="fig|909420.3.peg.164"/>
<dbReference type="HOGENOM" id="CLU_086499_3_2_4"/>
<dbReference type="Proteomes" id="UP000032707">
    <property type="component" value="Unassembled WGS sequence"/>
</dbReference>
<dbReference type="GO" id="GO:0022625">
    <property type="term" value="C:cytosolic large ribosomal subunit"/>
    <property type="evidence" value="ECO:0007669"/>
    <property type="project" value="TreeGrafter"/>
</dbReference>
<dbReference type="GO" id="GO:0003729">
    <property type="term" value="F:mRNA binding"/>
    <property type="evidence" value="ECO:0007669"/>
    <property type="project" value="TreeGrafter"/>
</dbReference>
<dbReference type="GO" id="GO:0003735">
    <property type="term" value="F:structural constituent of ribosome"/>
    <property type="evidence" value="ECO:0007669"/>
    <property type="project" value="InterPro"/>
</dbReference>
<dbReference type="GO" id="GO:0006412">
    <property type="term" value="P:translation"/>
    <property type="evidence" value="ECO:0007669"/>
    <property type="project" value="UniProtKB-UniRule"/>
</dbReference>
<dbReference type="CDD" id="cd00387">
    <property type="entry name" value="Ribosomal_L7_L12"/>
    <property type="match status" value="1"/>
</dbReference>
<dbReference type="FunFam" id="1.20.5.710:FF:000003">
    <property type="entry name" value="50S ribosomal protein L7/L12"/>
    <property type="match status" value="1"/>
</dbReference>
<dbReference type="FunFam" id="3.30.1390.10:FF:000001">
    <property type="entry name" value="50S ribosomal protein L7/L12"/>
    <property type="match status" value="1"/>
</dbReference>
<dbReference type="Gene3D" id="3.30.1390.10">
    <property type="match status" value="1"/>
</dbReference>
<dbReference type="Gene3D" id="1.20.5.710">
    <property type="entry name" value="Single helix bin"/>
    <property type="match status" value="1"/>
</dbReference>
<dbReference type="HAMAP" id="MF_00368">
    <property type="entry name" value="Ribosomal_bL12"/>
    <property type="match status" value="1"/>
</dbReference>
<dbReference type="InterPro" id="IPR000206">
    <property type="entry name" value="Ribosomal_bL12"/>
</dbReference>
<dbReference type="InterPro" id="IPR013823">
    <property type="entry name" value="Ribosomal_bL12_C"/>
</dbReference>
<dbReference type="InterPro" id="IPR014719">
    <property type="entry name" value="Ribosomal_bL12_C/ClpS-like"/>
</dbReference>
<dbReference type="InterPro" id="IPR008932">
    <property type="entry name" value="Ribosomal_bL12_oligo"/>
</dbReference>
<dbReference type="InterPro" id="IPR036235">
    <property type="entry name" value="Ribosomal_bL12_oligo_N_sf"/>
</dbReference>
<dbReference type="NCBIfam" id="TIGR00855">
    <property type="entry name" value="L12"/>
    <property type="match status" value="1"/>
</dbReference>
<dbReference type="PANTHER" id="PTHR45987">
    <property type="entry name" value="39S RIBOSOMAL PROTEIN L12"/>
    <property type="match status" value="1"/>
</dbReference>
<dbReference type="PANTHER" id="PTHR45987:SF4">
    <property type="entry name" value="LARGE RIBOSOMAL SUBUNIT PROTEIN BL12M"/>
    <property type="match status" value="1"/>
</dbReference>
<dbReference type="Pfam" id="PF00542">
    <property type="entry name" value="Ribosomal_L12"/>
    <property type="match status" value="1"/>
</dbReference>
<dbReference type="Pfam" id="PF16320">
    <property type="entry name" value="Ribosomal_L12_N"/>
    <property type="match status" value="1"/>
</dbReference>
<dbReference type="SUPFAM" id="SSF54736">
    <property type="entry name" value="ClpS-like"/>
    <property type="match status" value="1"/>
</dbReference>
<dbReference type="SUPFAM" id="SSF48300">
    <property type="entry name" value="Ribosomal protein L7/12, oligomerisation (N-terminal) domain"/>
    <property type="match status" value="1"/>
</dbReference>
<proteinExistence type="evidence at protein level"/>
<gene>
    <name evidence="1" type="primary">rplL</name>
    <name type="ordered locus">NMBH4476_0128</name>
    <name type="ORF">NMH_0346</name>
</gene>
<reference key="1">
    <citation type="submission" date="2010-12" db="EMBL/GenBank/DDBJ databases">
        <title>Genome Sequence of Neisseria meningitidis serogroup B strain H44/76.</title>
        <authorList>
            <person name="Piet J.R."/>
            <person name="Huis in 't Veld R."/>
            <person name="van Schaik B."/>
            <person name="van Kampen A."/>
            <person name="Baas F."/>
            <person name="van de Beek D."/>
            <person name="Pannekoek Y."/>
            <person name="van der Ende A."/>
        </authorList>
    </citation>
    <scope>NUCLEOTIDE SEQUENCE [LARGE SCALE GENOMIC DNA]</scope>
    <source>
        <strain>H44/76</strain>
    </source>
</reference>
<reference key="2">
    <citation type="journal article" date="2011" name="Proc. Natl. Acad. Sci. U.S.A.">
        <title>Neisseria meningitidis is structured in clades associated with restriction modification systems that modulate homologous recombination.</title>
        <authorList>
            <person name="Budroni S."/>
            <person name="Siena E."/>
            <person name="Hotopp J.C."/>
            <person name="Seib K.L."/>
            <person name="Serruto D."/>
            <person name="Nofroni C."/>
            <person name="Comanducci M."/>
            <person name="Riley D.R."/>
            <person name="Daugherty S.C."/>
            <person name="Angiuoli S.V."/>
            <person name="Covacci A."/>
            <person name="Pizza M."/>
            <person name="Rappuoli R."/>
            <person name="Moxon E.R."/>
            <person name="Tettelin H."/>
            <person name="Medini D."/>
        </authorList>
    </citation>
    <scope>NUCLEOTIDE SEQUENCE [LARGE SCALE GENOMIC DNA]</scope>
    <source>
        <strain>H44/76</strain>
    </source>
</reference>
<reference key="3">
    <citation type="journal article" date="1997" name="Microbiology">
        <title>Monoclonal antibodies against Streptococcus pneumoniae detect epitopes on eubacterial ribosomal proteins L7/L12 and on streptococcal elongation factor Ts.</title>
        <authorList>
            <person name="Kolberg J."/>
            <person name="Hoiby E.A."/>
            <person name="Lopez R."/>
            <person name="Sletten K."/>
        </authorList>
    </citation>
    <scope>PROTEIN SEQUENCE OF 2-21</scope>
    <source>
        <strain>H44/76</strain>
    </source>
</reference>
<keyword id="KW-0903">Direct protein sequencing</keyword>
<keyword id="KW-0687">Ribonucleoprotein</keyword>
<keyword id="KW-0689">Ribosomal protein</keyword>
<protein>
    <recommendedName>
        <fullName evidence="1">Large ribosomal subunit protein bL12</fullName>
    </recommendedName>
    <alternativeName>
        <fullName evidence="3">50S ribosomal protein L7/L12</fullName>
    </alternativeName>
</protein>
<feature type="initiator methionine" description="Removed" evidence="2">
    <location>
        <position position="1"/>
    </location>
</feature>
<feature type="chain" id="PRO_0000411120" description="Large ribosomal subunit protein bL12">
    <location>
        <begin position="2"/>
        <end position="123"/>
    </location>
</feature>
<sequence length="123" mass="12622">MAITKEDILEAVGSLTVMELNDLVKAFEEKFGVSAAAVAVAGPAGAGAADAEEKTEFDVVLASAGDQKVGVIKVVRAITGLGLKEAKDIVDGAPKTIKEGVSKAEAEDIQKQLEEAGAKVEIK</sequence>
<organism>
    <name type="scientific">Neisseria meningitidis serogroup B / serotype 15 (strain H44/76)</name>
    <dbReference type="NCBI Taxonomy" id="909420"/>
    <lineage>
        <taxon>Bacteria</taxon>
        <taxon>Pseudomonadati</taxon>
        <taxon>Pseudomonadota</taxon>
        <taxon>Betaproteobacteria</taxon>
        <taxon>Neisseriales</taxon>
        <taxon>Neisseriaceae</taxon>
        <taxon>Neisseria</taxon>
    </lineage>
</organism>
<name>RL7_NEIMH</name>